<accession>C0RIL9</accession>
<keyword id="KW-0963">Cytoplasm</keyword>
<keyword id="KW-0378">Hydrolase</keyword>
<keyword id="KW-0479">Metal-binding</keyword>
<keyword id="KW-0547">Nucleotide-binding</keyword>
<proteinExistence type="inferred from homology"/>
<sequence>MRILLTNDDGIHAEGLAVLERIARKLSDDVWVVAPETDQSGLAHSLTLSEPLRLRQIDARHFALRGTPTDCVIMGVRHVLPGAPDLVLSGVNSGANMADDVTYSGTVAGAMEGTLLGVRAIALSQEYEYAGDRRIVPWETAEAHAPELIGRLMEAGWPEGVLLNLNFPNCAPEEVKGVRVTAQGKLSHDARLDERRDGRGFPYFWLHFGRGKAPVADDSDIAAIRSGCISVTPLHLDLTAHKVRAELGAALGVEA</sequence>
<gene>
    <name evidence="1" type="primary">surE</name>
    <name type="ordered locus">BMEA_A0924</name>
</gene>
<comment type="function">
    <text evidence="1">Nucleotidase that shows phosphatase activity on nucleoside 5'-monophosphates.</text>
</comment>
<comment type="catalytic activity">
    <reaction evidence="1">
        <text>a ribonucleoside 5'-phosphate + H2O = a ribonucleoside + phosphate</text>
        <dbReference type="Rhea" id="RHEA:12484"/>
        <dbReference type="ChEBI" id="CHEBI:15377"/>
        <dbReference type="ChEBI" id="CHEBI:18254"/>
        <dbReference type="ChEBI" id="CHEBI:43474"/>
        <dbReference type="ChEBI" id="CHEBI:58043"/>
        <dbReference type="EC" id="3.1.3.5"/>
    </reaction>
</comment>
<comment type="cofactor">
    <cofactor evidence="1">
        <name>a divalent metal cation</name>
        <dbReference type="ChEBI" id="CHEBI:60240"/>
    </cofactor>
    <text evidence="1">Binds 1 divalent metal cation per subunit.</text>
</comment>
<comment type="subcellular location">
    <subcellularLocation>
        <location evidence="1">Cytoplasm</location>
    </subcellularLocation>
</comment>
<comment type="similarity">
    <text evidence="1">Belongs to the SurE nucleotidase family.</text>
</comment>
<feature type="chain" id="PRO_1000196584" description="5'-nucleotidase SurE">
    <location>
        <begin position="1"/>
        <end position="255"/>
    </location>
</feature>
<feature type="binding site" evidence="1">
    <location>
        <position position="8"/>
    </location>
    <ligand>
        <name>a divalent metal cation</name>
        <dbReference type="ChEBI" id="CHEBI:60240"/>
    </ligand>
</feature>
<feature type="binding site" evidence="1">
    <location>
        <position position="9"/>
    </location>
    <ligand>
        <name>a divalent metal cation</name>
        <dbReference type="ChEBI" id="CHEBI:60240"/>
    </ligand>
</feature>
<feature type="binding site" evidence="1">
    <location>
        <position position="40"/>
    </location>
    <ligand>
        <name>a divalent metal cation</name>
        <dbReference type="ChEBI" id="CHEBI:60240"/>
    </ligand>
</feature>
<feature type="binding site" evidence="1">
    <location>
        <position position="92"/>
    </location>
    <ligand>
        <name>a divalent metal cation</name>
        <dbReference type="ChEBI" id="CHEBI:60240"/>
    </ligand>
</feature>
<evidence type="ECO:0000255" key="1">
    <source>
        <dbReference type="HAMAP-Rule" id="MF_00060"/>
    </source>
</evidence>
<organism>
    <name type="scientific">Brucella melitensis biotype 2 (strain ATCC 23457)</name>
    <dbReference type="NCBI Taxonomy" id="546272"/>
    <lineage>
        <taxon>Bacteria</taxon>
        <taxon>Pseudomonadati</taxon>
        <taxon>Pseudomonadota</taxon>
        <taxon>Alphaproteobacteria</taxon>
        <taxon>Hyphomicrobiales</taxon>
        <taxon>Brucellaceae</taxon>
        <taxon>Brucella/Ochrobactrum group</taxon>
        <taxon>Brucella</taxon>
    </lineage>
</organism>
<dbReference type="EC" id="3.1.3.5" evidence="1"/>
<dbReference type="EMBL" id="CP001488">
    <property type="protein sequence ID" value="ACO00677.1"/>
    <property type="molecule type" value="Genomic_DNA"/>
</dbReference>
<dbReference type="RefSeq" id="WP_004683703.1">
    <property type="nucleotide sequence ID" value="NC_012441.1"/>
</dbReference>
<dbReference type="SMR" id="C0RIL9"/>
<dbReference type="GeneID" id="97533818"/>
<dbReference type="KEGG" id="bmi:BMEA_A0924"/>
<dbReference type="HOGENOM" id="CLU_045192_1_2_5"/>
<dbReference type="Proteomes" id="UP000001748">
    <property type="component" value="Chromosome I"/>
</dbReference>
<dbReference type="GO" id="GO:0005737">
    <property type="term" value="C:cytoplasm"/>
    <property type="evidence" value="ECO:0007669"/>
    <property type="project" value="UniProtKB-SubCell"/>
</dbReference>
<dbReference type="GO" id="GO:0008254">
    <property type="term" value="F:3'-nucleotidase activity"/>
    <property type="evidence" value="ECO:0007669"/>
    <property type="project" value="TreeGrafter"/>
</dbReference>
<dbReference type="GO" id="GO:0008253">
    <property type="term" value="F:5'-nucleotidase activity"/>
    <property type="evidence" value="ECO:0007669"/>
    <property type="project" value="UniProtKB-UniRule"/>
</dbReference>
<dbReference type="GO" id="GO:0004309">
    <property type="term" value="F:exopolyphosphatase activity"/>
    <property type="evidence" value="ECO:0007669"/>
    <property type="project" value="TreeGrafter"/>
</dbReference>
<dbReference type="GO" id="GO:0046872">
    <property type="term" value="F:metal ion binding"/>
    <property type="evidence" value="ECO:0007669"/>
    <property type="project" value="UniProtKB-UniRule"/>
</dbReference>
<dbReference type="GO" id="GO:0000166">
    <property type="term" value="F:nucleotide binding"/>
    <property type="evidence" value="ECO:0007669"/>
    <property type="project" value="UniProtKB-KW"/>
</dbReference>
<dbReference type="FunFam" id="3.40.1210.10:FF:000001">
    <property type="entry name" value="5'/3'-nucleotidase SurE"/>
    <property type="match status" value="1"/>
</dbReference>
<dbReference type="Gene3D" id="3.40.1210.10">
    <property type="entry name" value="Survival protein SurE-like phosphatase/nucleotidase"/>
    <property type="match status" value="1"/>
</dbReference>
<dbReference type="HAMAP" id="MF_00060">
    <property type="entry name" value="SurE"/>
    <property type="match status" value="1"/>
</dbReference>
<dbReference type="InterPro" id="IPR030048">
    <property type="entry name" value="SurE"/>
</dbReference>
<dbReference type="InterPro" id="IPR002828">
    <property type="entry name" value="SurE-like_Pase/nucleotidase"/>
</dbReference>
<dbReference type="InterPro" id="IPR036523">
    <property type="entry name" value="SurE-like_sf"/>
</dbReference>
<dbReference type="NCBIfam" id="NF001490">
    <property type="entry name" value="PRK00346.1-4"/>
    <property type="match status" value="1"/>
</dbReference>
<dbReference type="NCBIfam" id="TIGR00087">
    <property type="entry name" value="surE"/>
    <property type="match status" value="1"/>
</dbReference>
<dbReference type="PANTHER" id="PTHR30457">
    <property type="entry name" value="5'-NUCLEOTIDASE SURE"/>
    <property type="match status" value="1"/>
</dbReference>
<dbReference type="PANTHER" id="PTHR30457:SF12">
    <property type="entry name" value="5'_3'-NUCLEOTIDASE SURE"/>
    <property type="match status" value="1"/>
</dbReference>
<dbReference type="Pfam" id="PF01975">
    <property type="entry name" value="SurE"/>
    <property type="match status" value="1"/>
</dbReference>
<dbReference type="SUPFAM" id="SSF64167">
    <property type="entry name" value="SurE-like"/>
    <property type="match status" value="1"/>
</dbReference>
<name>SURE_BRUMB</name>
<protein>
    <recommendedName>
        <fullName evidence="1">5'-nucleotidase SurE</fullName>
        <ecNumber evidence="1">3.1.3.5</ecNumber>
    </recommendedName>
    <alternativeName>
        <fullName evidence="1">Nucleoside 5'-monophosphate phosphohydrolase</fullName>
    </alternativeName>
</protein>
<reference key="1">
    <citation type="submission" date="2009-03" db="EMBL/GenBank/DDBJ databases">
        <title>Brucella melitensis ATCC 23457 whole genome shotgun sequencing project.</title>
        <authorList>
            <person name="Setubal J.C."/>
            <person name="Boyle S."/>
            <person name="Crasta O.R."/>
            <person name="Gillespie J.J."/>
            <person name="Kenyon R.W."/>
            <person name="Lu J."/>
            <person name="Mane S."/>
            <person name="Nagrani S."/>
            <person name="Shallom J.M."/>
            <person name="Shallom S."/>
            <person name="Shukla M."/>
            <person name="Snyder E.E."/>
            <person name="Sobral B.W."/>
            <person name="Wattam A.R."/>
            <person name="Will R."/>
            <person name="Williams K."/>
            <person name="Yoo H."/>
            <person name="Munk C."/>
            <person name="Tapia R."/>
            <person name="Han C."/>
            <person name="Detter J.C."/>
            <person name="Bruce D."/>
            <person name="Brettin T.S."/>
        </authorList>
    </citation>
    <scope>NUCLEOTIDE SEQUENCE [LARGE SCALE GENOMIC DNA]</scope>
    <source>
        <strain>ATCC 23457</strain>
    </source>
</reference>